<comment type="function">
    <text evidence="2 7">Palmitoyltransferase that could catalyze the addition of palmitate onto various protein substrates and be involved in a variety of cellular processes (By similarity). Catalyzes the palmitoylation of KCNMA1, regulating localization of KCNMA1 to the plasma membrane (By similarity). Might also mediate palmitoylation of CNN3 (Probable).</text>
</comment>
<comment type="catalytic activity">
    <reaction evidence="2">
        <text>L-cysteinyl-[protein] + hexadecanoyl-CoA = S-hexadecanoyl-L-cysteinyl-[protein] + CoA</text>
        <dbReference type="Rhea" id="RHEA:36683"/>
        <dbReference type="Rhea" id="RHEA-COMP:10131"/>
        <dbReference type="Rhea" id="RHEA-COMP:11032"/>
        <dbReference type="ChEBI" id="CHEBI:29950"/>
        <dbReference type="ChEBI" id="CHEBI:57287"/>
        <dbReference type="ChEBI" id="CHEBI:57379"/>
        <dbReference type="ChEBI" id="CHEBI:74151"/>
        <dbReference type="EC" id="2.3.1.225"/>
    </reaction>
    <physiologicalReaction direction="left-to-right" evidence="2">
        <dbReference type="Rhea" id="RHEA:36684"/>
    </physiologicalReaction>
</comment>
<comment type="subunit">
    <text evidence="5">Interacts with CNN3.</text>
</comment>
<comment type="subcellular location">
    <subcellularLocation>
        <location evidence="2">Endoplasmic reticulum membrane</location>
        <topology evidence="3">Multi-pass membrane protein</topology>
    </subcellularLocation>
    <subcellularLocation>
        <location evidence="2">Golgi apparatus membrane</location>
        <topology evidence="3">Multi-pass membrane protein</topology>
    </subcellularLocation>
</comment>
<comment type="domain">
    <text evidence="1">The DHHC domain is required for palmitoyltransferase activity.</text>
</comment>
<comment type="similarity">
    <text evidence="6">Belongs to the DHHC palmitoyltransferase family.</text>
</comment>
<name>ZDH22_MOUSE</name>
<protein>
    <recommendedName>
        <fullName evidence="6">Palmitoyltransferase ZDHHC22</fullName>
        <ecNumber evidence="2">2.3.1.225</ecNumber>
    </recommendedName>
    <alternativeName>
        <fullName evidence="8">Zinc finger DHHC domain-containing protein 22</fullName>
        <shortName>DHHC-22</shortName>
        <shortName>zDHHC22</shortName>
    </alternativeName>
</protein>
<keyword id="KW-0012">Acyltransferase</keyword>
<keyword id="KW-0256">Endoplasmic reticulum</keyword>
<keyword id="KW-0333">Golgi apparatus</keyword>
<keyword id="KW-0449">Lipoprotein</keyword>
<keyword id="KW-0472">Membrane</keyword>
<keyword id="KW-0564">Palmitate</keyword>
<keyword id="KW-1185">Reference proteome</keyword>
<keyword id="KW-0808">Transferase</keyword>
<keyword id="KW-0812">Transmembrane</keyword>
<keyword id="KW-1133">Transmembrane helix</keyword>
<gene>
    <name evidence="8" type="primary">Zdhhc22</name>
    <name type="synonym">Gm262</name>
</gene>
<organism>
    <name type="scientific">Mus musculus</name>
    <name type="common">Mouse</name>
    <dbReference type="NCBI Taxonomy" id="10090"/>
    <lineage>
        <taxon>Eukaryota</taxon>
        <taxon>Metazoa</taxon>
        <taxon>Chordata</taxon>
        <taxon>Craniata</taxon>
        <taxon>Vertebrata</taxon>
        <taxon>Euteleostomi</taxon>
        <taxon>Mammalia</taxon>
        <taxon>Eutheria</taxon>
        <taxon>Euarchontoglires</taxon>
        <taxon>Glires</taxon>
        <taxon>Rodentia</taxon>
        <taxon>Myomorpha</taxon>
        <taxon>Muroidea</taxon>
        <taxon>Muridae</taxon>
        <taxon>Murinae</taxon>
        <taxon>Mus</taxon>
        <taxon>Mus</taxon>
    </lineage>
</organism>
<sequence>MLALRLLNVVAPAYFLCISLVTFVLQLFLFLPSMREDPTATPLFSPAVLHGALFLFLSANALGNYVLVIQNSPDDLGTCQGTMSQRPQCPPPSTHFCRVCSRVTLRHDHHCFFTGNCIGSRNMRNFILFCLYTSLACLYSMVAGVAYISAVLSISFAHPLAFLTLLPTSISQFFSGAVLGSDMFVILMLYLWFAVGLACAGFCCHQLLLILRGQTRYQVRKGMAVRARPWRKNLQEVFGKRWLLGLLVPMFNVGTESSKQQDK</sequence>
<evidence type="ECO:0000250" key="1">
    <source>
        <dbReference type="UniProtKB" id="Q8IUH5"/>
    </source>
</evidence>
<evidence type="ECO:0000250" key="2">
    <source>
        <dbReference type="UniProtKB" id="Q8N966"/>
    </source>
</evidence>
<evidence type="ECO:0000255" key="3"/>
<evidence type="ECO:0000255" key="4">
    <source>
        <dbReference type="PROSITE-ProRule" id="PRU00067"/>
    </source>
</evidence>
<evidence type="ECO:0000269" key="5">
    <source>
    </source>
</evidence>
<evidence type="ECO:0000305" key="6"/>
<evidence type="ECO:0000305" key="7">
    <source>
    </source>
</evidence>
<evidence type="ECO:0000312" key="8">
    <source>
        <dbReference type="MGI" id="MGI:2685108"/>
    </source>
</evidence>
<dbReference type="EC" id="2.3.1.225" evidence="2"/>
<dbReference type="EMBL" id="BC128021">
    <property type="protein sequence ID" value="AAI28022.1"/>
    <property type="molecule type" value="mRNA"/>
</dbReference>
<dbReference type="CCDS" id="CCDS36500.1"/>
<dbReference type="RefSeq" id="NP_001074412.1">
    <property type="nucleotide sequence ID" value="NM_001080943.3"/>
</dbReference>
<dbReference type="RefSeq" id="NP_001363954.1">
    <property type="nucleotide sequence ID" value="NM_001377025.1"/>
</dbReference>
<dbReference type="RefSeq" id="XP_006515914.1">
    <property type="nucleotide sequence ID" value="XM_006515851.2"/>
</dbReference>
<dbReference type="RefSeq" id="XP_006515915.1">
    <property type="nucleotide sequence ID" value="XM_006515852.3"/>
</dbReference>
<dbReference type="FunCoup" id="A0PK84">
    <property type="interactions" value="434"/>
</dbReference>
<dbReference type="STRING" id="10090.ENSMUSP00000152660"/>
<dbReference type="PaxDb" id="10090-ENSMUSP00000093177"/>
<dbReference type="ProteomicsDB" id="275341"/>
<dbReference type="Antibodypedia" id="70659">
    <property type="antibodies" value="25 antibodies from 13 providers"/>
</dbReference>
<dbReference type="Ensembl" id="ENSMUST00000095521.3">
    <property type="protein sequence ID" value="ENSMUSP00000093177.3"/>
    <property type="gene ID" value="ENSMUSG00000048483.7"/>
</dbReference>
<dbReference type="Ensembl" id="ENSMUST00000222543.2">
    <property type="protein sequence ID" value="ENSMUSP00000152660.2"/>
    <property type="gene ID" value="ENSMUSG00000048483.7"/>
</dbReference>
<dbReference type="GeneID" id="238331"/>
<dbReference type="KEGG" id="mmu:238331"/>
<dbReference type="UCSC" id="uc007oie.1">
    <property type="organism name" value="mouse"/>
</dbReference>
<dbReference type="AGR" id="MGI:2685108"/>
<dbReference type="CTD" id="283576"/>
<dbReference type="MGI" id="MGI:2685108">
    <property type="gene designation" value="Zdhhc22"/>
</dbReference>
<dbReference type="VEuPathDB" id="HostDB:ENSMUSG00000048483"/>
<dbReference type="eggNOG" id="KOG1311">
    <property type="taxonomic scope" value="Eukaryota"/>
</dbReference>
<dbReference type="GeneTree" id="ENSGT00730000111268"/>
<dbReference type="HOGENOM" id="CLU_027721_5_3_1"/>
<dbReference type="InParanoid" id="A0PK84"/>
<dbReference type="OMA" id="GQTWCQL"/>
<dbReference type="OrthoDB" id="302728at2759"/>
<dbReference type="PhylomeDB" id="A0PK84"/>
<dbReference type="TreeFam" id="TF342115"/>
<dbReference type="BioGRID-ORCS" id="238331">
    <property type="hits" value="3 hits in 75 CRISPR screens"/>
</dbReference>
<dbReference type="PRO" id="PR:A0PK84"/>
<dbReference type="Proteomes" id="UP000000589">
    <property type="component" value="Chromosome 12"/>
</dbReference>
<dbReference type="RNAct" id="A0PK84">
    <property type="molecule type" value="protein"/>
</dbReference>
<dbReference type="Bgee" id="ENSMUSG00000048483">
    <property type="expression patterns" value="Expressed in medial dorsal nucleus of thalamus and 62 other cell types or tissues"/>
</dbReference>
<dbReference type="GO" id="GO:0005789">
    <property type="term" value="C:endoplasmic reticulum membrane"/>
    <property type="evidence" value="ECO:0007669"/>
    <property type="project" value="UniProtKB-SubCell"/>
</dbReference>
<dbReference type="GO" id="GO:0000139">
    <property type="term" value="C:Golgi membrane"/>
    <property type="evidence" value="ECO:0007669"/>
    <property type="project" value="UniProtKB-SubCell"/>
</dbReference>
<dbReference type="GO" id="GO:0005886">
    <property type="term" value="C:plasma membrane"/>
    <property type="evidence" value="ECO:0007669"/>
    <property type="project" value="Ensembl"/>
</dbReference>
<dbReference type="GO" id="GO:0019706">
    <property type="term" value="F:protein-cysteine S-palmitoyltransferase activity"/>
    <property type="evidence" value="ECO:0007669"/>
    <property type="project" value="UniProtKB-EC"/>
</dbReference>
<dbReference type="GO" id="GO:0072659">
    <property type="term" value="P:protein localization to plasma membrane"/>
    <property type="evidence" value="ECO:0000315"/>
    <property type="project" value="MGI"/>
</dbReference>
<dbReference type="InterPro" id="IPR001594">
    <property type="entry name" value="Palmitoyltrfase_DHHC"/>
</dbReference>
<dbReference type="InterPro" id="IPR039859">
    <property type="entry name" value="PFA4/ZDH16/20/ERF2-like"/>
</dbReference>
<dbReference type="InterPro" id="IPR000731">
    <property type="entry name" value="SSD"/>
</dbReference>
<dbReference type="PANTHER" id="PTHR12246">
    <property type="entry name" value="PALMITOYLTRANSFERASE ZDHHC16"/>
    <property type="match status" value="1"/>
</dbReference>
<dbReference type="Pfam" id="PF01529">
    <property type="entry name" value="DHHC"/>
    <property type="match status" value="1"/>
</dbReference>
<dbReference type="PROSITE" id="PS50216">
    <property type="entry name" value="DHHC"/>
    <property type="match status" value="1"/>
</dbReference>
<dbReference type="PROSITE" id="PS50156">
    <property type="entry name" value="SSD"/>
    <property type="match status" value="1"/>
</dbReference>
<reference key="1">
    <citation type="journal article" date="2004" name="Genome Res.">
        <title>The status, quality, and expansion of the NIH full-length cDNA project: the Mammalian Gene Collection (MGC).</title>
        <authorList>
            <consortium name="The MGC Project Team"/>
        </authorList>
    </citation>
    <scope>NUCLEOTIDE SEQUENCE [LARGE SCALE MRNA]</scope>
</reference>
<reference key="2">
    <citation type="journal article" date="2018" name="Biochem. Biophys. Res. Commun.">
        <title>CCN3 secretion is regulated by palmitoylation via ZDHHC22.</title>
        <authorList>
            <person name="Kim Y."/>
            <person name="Yang H."/>
            <person name="Min J.K."/>
            <person name="Park Y.J."/>
            <person name="Jeong S.H."/>
            <person name="Jang S.W."/>
            <person name="Shim S."/>
        </authorList>
    </citation>
    <scope>FUNCTION</scope>
    <scope>INTERACTION WITH CCN3</scope>
</reference>
<feature type="chain" id="PRO_0000278772" description="Palmitoyltransferase ZDHHC22">
    <location>
        <begin position="1"/>
        <end position="263"/>
    </location>
</feature>
<feature type="topological domain" description="Cytoplasmic" evidence="6">
    <location>
        <begin position="1"/>
        <end position="9"/>
    </location>
</feature>
<feature type="transmembrane region" description="Helical" evidence="3">
    <location>
        <begin position="10"/>
        <end position="30"/>
    </location>
</feature>
<feature type="topological domain" description="Lumenal" evidence="6">
    <location>
        <begin position="31"/>
        <end position="48"/>
    </location>
</feature>
<feature type="transmembrane region" description="Helical" evidence="3">
    <location>
        <begin position="49"/>
        <end position="69"/>
    </location>
</feature>
<feature type="topological domain" description="Cytoplasmic" evidence="6">
    <location>
        <begin position="70"/>
        <end position="125"/>
    </location>
</feature>
<feature type="transmembrane region" description="Helical" evidence="3">
    <location>
        <begin position="126"/>
        <end position="146"/>
    </location>
</feature>
<feature type="transmembrane region" description="Helical" evidence="3">
    <location>
        <begin position="147"/>
        <end position="167"/>
    </location>
</feature>
<feature type="topological domain" description="Cytoplasmic" evidence="6">
    <location>
        <begin position="168"/>
        <end position="182"/>
    </location>
</feature>
<feature type="transmembrane region" description="Helical" evidence="3">
    <location>
        <begin position="183"/>
        <end position="203"/>
    </location>
</feature>
<feature type="topological domain" description="Lumenal" evidence="6">
    <location>
        <begin position="204"/>
        <end position="263"/>
    </location>
</feature>
<feature type="domain" description="DHHC" evidence="4">
    <location>
        <begin position="91"/>
        <end position="131"/>
    </location>
</feature>
<feature type="active site" description="S-palmitoyl cysteine intermediate" evidence="4">
    <location>
        <position position="111"/>
    </location>
</feature>
<proteinExistence type="evidence at protein level"/>
<accession>A0PK84</accession>